<name>DACA_ECO57</name>
<keyword id="KW-0121">Carboxypeptidase</keyword>
<keyword id="KW-0997">Cell inner membrane</keyword>
<keyword id="KW-1003">Cell membrane</keyword>
<keyword id="KW-0133">Cell shape</keyword>
<keyword id="KW-0961">Cell wall biogenesis/degradation</keyword>
<keyword id="KW-0378">Hydrolase</keyword>
<keyword id="KW-0472">Membrane</keyword>
<keyword id="KW-0573">Peptidoglycan synthesis</keyword>
<keyword id="KW-0645">Protease</keyword>
<keyword id="KW-1185">Reference proteome</keyword>
<keyword id="KW-0732">Signal</keyword>
<reference key="1">
    <citation type="journal article" date="2001" name="Nature">
        <title>Genome sequence of enterohaemorrhagic Escherichia coli O157:H7.</title>
        <authorList>
            <person name="Perna N.T."/>
            <person name="Plunkett G. III"/>
            <person name="Burland V."/>
            <person name="Mau B."/>
            <person name="Glasner J.D."/>
            <person name="Rose D.J."/>
            <person name="Mayhew G.F."/>
            <person name="Evans P.S."/>
            <person name="Gregor J."/>
            <person name="Kirkpatrick H.A."/>
            <person name="Posfai G."/>
            <person name="Hackett J."/>
            <person name="Klink S."/>
            <person name="Boutin A."/>
            <person name="Shao Y."/>
            <person name="Miller L."/>
            <person name="Grotbeck E.J."/>
            <person name="Davis N.W."/>
            <person name="Lim A."/>
            <person name="Dimalanta E.T."/>
            <person name="Potamousis K."/>
            <person name="Apodaca J."/>
            <person name="Anantharaman T.S."/>
            <person name="Lin J."/>
            <person name="Yen G."/>
            <person name="Schwartz D.C."/>
            <person name="Welch R.A."/>
            <person name="Blattner F.R."/>
        </authorList>
    </citation>
    <scope>NUCLEOTIDE SEQUENCE [LARGE SCALE GENOMIC DNA]</scope>
    <source>
        <strain>O157:H7 / EDL933 / ATCC 700927 / EHEC</strain>
    </source>
</reference>
<reference key="2">
    <citation type="journal article" date="2001" name="DNA Res.">
        <title>Complete genome sequence of enterohemorrhagic Escherichia coli O157:H7 and genomic comparison with a laboratory strain K-12.</title>
        <authorList>
            <person name="Hayashi T."/>
            <person name="Makino K."/>
            <person name="Ohnishi M."/>
            <person name="Kurokawa K."/>
            <person name="Ishii K."/>
            <person name="Yokoyama K."/>
            <person name="Han C.-G."/>
            <person name="Ohtsubo E."/>
            <person name="Nakayama K."/>
            <person name="Murata T."/>
            <person name="Tanaka M."/>
            <person name="Tobe T."/>
            <person name="Iida T."/>
            <person name="Takami H."/>
            <person name="Honda T."/>
            <person name="Sasakawa C."/>
            <person name="Ogasawara N."/>
            <person name="Yasunaga T."/>
            <person name="Kuhara S."/>
            <person name="Shiba T."/>
            <person name="Hattori M."/>
            <person name="Shinagawa H."/>
        </authorList>
    </citation>
    <scope>NUCLEOTIDE SEQUENCE [LARGE SCALE GENOMIC DNA]</scope>
    <source>
        <strain>O157:H7 / Sakai / RIMD 0509952 / EHEC</strain>
    </source>
</reference>
<gene>
    <name type="primary">dacA</name>
    <name type="ordered locus">Z0777</name>
    <name type="ordered locus">ECs0670</name>
</gene>
<dbReference type="EC" id="3.4.16.4"/>
<dbReference type="EMBL" id="AE005174">
    <property type="protein sequence ID" value="AAG54966.1"/>
    <property type="molecule type" value="Genomic_DNA"/>
</dbReference>
<dbReference type="EMBL" id="BA000007">
    <property type="protein sequence ID" value="BAB34093.2"/>
    <property type="molecule type" value="Genomic_DNA"/>
</dbReference>
<dbReference type="PIR" id="B85563">
    <property type="entry name" value="B85563"/>
</dbReference>
<dbReference type="PIR" id="F90712">
    <property type="entry name" value="F90712"/>
</dbReference>
<dbReference type="RefSeq" id="NP_308697.1">
    <property type="nucleotide sequence ID" value="NC_002695.1"/>
</dbReference>
<dbReference type="RefSeq" id="WP_001092082.1">
    <property type="nucleotide sequence ID" value="NZ_VOAI01000012.1"/>
</dbReference>
<dbReference type="SMR" id="P0AEB4"/>
<dbReference type="STRING" id="155864.Z0777"/>
<dbReference type="MEROPS" id="S11.008"/>
<dbReference type="GeneID" id="917030"/>
<dbReference type="GeneID" id="93776850"/>
<dbReference type="KEGG" id="ece:Z0777"/>
<dbReference type="KEGG" id="ecs:ECs_0670"/>
<dbReference type="PATRIC" id="fig|386585.9.peg.781"/>
<dbReference type="eggNOG" id="COG1686">
    <property type="taxonomic scope" value="Bacteria"/>
</dbReference>
<dbReference type="HOGENOM" id="CLU_027070_8_1_6"/>
<dbReference type="OMA" id="QNTHFQT"/>
<dbReference type="UniPathway" id="UPA00219"/>
<dbReference type="Proteomes" id="UP000000558">
    <property type="component" value="Chromosome"/>
</dbReference>
<dbReference type="Proteomes" id="UP000002519">
    <property type="component" value="Chromosome"/>
</dbReference>
<dbReference type="GO" id="GO:0005886">
    <property type="term" value="C:plasma membrane"/>
    <property type="evidence" value="ECO:0007669"/>
    <property type="project" value="UniProtKB-SubCell"/>
</dbReference>
<dbReference type="GO" id="GO:0009002">
    <property type="term" value="F:serine-type D-Ala-D-Ala carboxypeptidase activity"/>
    <property type="evidence" value="ECO:0007669"/>
    <property type="project" value="UniProtKB-EC"/>
</dbReference>
<dbReference type="GO" id="GO:0071555">
    <property type="term" value="P:cell wall organization"/>
    <property type="evidence" value="ECO:0007669"/>
    <property type="project" value="UniProtKB-KW"/>
</dbReference>
<dbReference type="GO" id="GO:0009252">
    <property type="term" value="P:peptidoglycan biosynthetic process"/>
    <property type="evidence" value="ECO:0007669"/>
    <property type="project" value="UniProtKB-UniPathway"/>
</dbReference>
<dbReference type="GO" id="GO:0006508">
    <property type="term" value="P:proteolysis"/>
    <property type="evidence" value="ECO:0007669"/>
    <property type="project" value="UniProtKB-KW"/>
</dbReference>
<dbReference type="GO" id="GO:0008360">
    <property type="term" value="P:regulation of cell shape"/>
    <property type="evidence" value="ECO:0007669"/>
    <property type="project" value="UniProtKB-KW"/>
</dbReference>
<dbReference type="FunFam" id="2.60.410.10:FF:000001">
    <property type="entry name" value="D-alanyl-D-alanine carboxypeptidase dacA"/>
    <property type="match status" value="1"/>
</dbReference>
<dbReference type="FunFam" id="3.40.710.10:FF:000001">
    <property type="entry name" value="D-alanyl-D-alanine serine-type carboxypeptidase"/>
    <property type="match status" value="1"/>
</dbReference>
<dbReference type="Gene3D" id="2.60.410.10">
    <property type="entry name" value="D-Ala-D-Ala carboxypeptidase, C-terminal domain"/>
    <property type="match status" value="1"/>
</dbReference>
<dbReference type="Gene3D" id="3.40.710.10">
    <property type="entry name" value="DD-peptidase/beta-lactamase superfamily"/>
    <property type="match status" value="1"/>
</dbReference>
<dbReference type="InterPro" id="IPR012338">
    <property type="entry name" value="Beta-lactam/transpept-like"/>
</dbReference>
<dbReference type="InterPro" id="IPR015956">
    <property type="entry name" value="Peniciliin-bd_prot_C_sf"/>
</dbReference>
<dbReference type="InterPro" id="IPR018044">
    <property type="entry name" value="Peptidase_S11"/>
</dbReference>
<dbReference type="InterPro" id="IPR012907">
    <property type="entry name" value="Peptidase_S11_C"/>
</dbReference>
<dbReference type="InterPro" id="IPR037167">
    <property type="entry name" value="Peptidase_S11_C_sf"/>
</dbReference>
<dbReference type="InterPro" id="IPR001967">
    <property type="entry name" value="Peptidase_S11_N"/>
</dbReference>
<dbReference type="NCBIfam" id="NF008059">
    <property type="entry name" value="PRK10793.1"/>
    <property type="match status" value="1"/>
</dbReference>
<dbReference type="PANTHER" id="PTHR21581">
    <property type="entry name" value="D-ALANYL-D-ALANINE CARBOXYPEPTIDASE"/>
    <property type="match status" value="1"/>
</dbReference>
<dbReference type="PANTHER" id="PTHR21581:SF27">
    <property type="entry name" value="D-ALANYL-D-ALANINE CARBOXYPEPTIDASE DACA"/>
    <property type="match status" value="1"/>
</dbReference>
<dbReference type="Pfam" id="PF07943">
    <property type="entry name" value="PBP5_C"/>
    <property type="match status" value="1"/>
</dbReference>
<dbReference type="Pfam" id="PF00768">
    <property type="entry name" value="Peptidase_S11"/>
    <property type="match status" value="1"/>
</dbReference>
<dbReference type="PRINTS" id="PR00725">
    <property type="entry name" value="DADACBPTASE1"/>
</dbReference>
<dbReference type="SMART" id="SM00936">
    <property type="entry name" value="PBP5_C"/>
    <property type="match status" value="1"/>
</dbReference>
<dbReference type="SUPFAM" id="SSF56601">
    <property type="entry name" value="beta-lactamase/transpeptidase-like"/>
    <property type="match status" value="1"/>
</dbReference>
<dbReference type="SUPFAM" id="SSF69189">
    <property type="entry name" value="Penicillin-binding protein associated domain"/>
    <property type="match status" value="1"/>
</dbReference>
<feature type="signal peptide" evidence="1">
    <location>
        <begin position="1"/>
        <end position="29"/>
    </location>
</feature>
<feature type="chain" id="PRO_0000043391" description="D-alanyl-D-alanine carboxypeptidase DacA">
    <location>
        <begin position="30"/>
        <end position="403"/>
    </location>
</feature>
<feature type="active site" description="Acyl-ester intermediate" evidence="1">
    <location>
        <position position="73"/>
    </location>
</feature>
<feature type="active site" description="Proton acceptor" evidence="1">
    <location>
        <position position="76"/>
    </location>
</feature>
<feature type="active site" evidence="1">
    <location>
        <position position="139"/>
    </location>
</feature>
<feature type="binding site" evidence="1">
    <location>
        <position position="242"/>
    </location>
    <ligand>
        <name>substrate</name>
    </ligand>
</feature>
<accession>P0AEB4</accession>
<accession>P04287</accession>
<accession>P77106</accession>
<proteinExistence type="inferred from homology"/>
<evidence type="ECO:0000250" key="1"/>
<evidence type="ECO:0000305" key="2"/>
<organism>
    <name type="scientific">Escherichia coli O157:H7</name>
    <dbReference type="NCBI Taxonomy" id="83334"/>
    <lineage>
        <taxon>Bacteria</taxon>
        <taxon>Pseudomonadati</taxon>
        <taxon>Pseudomonadota</taxon>
        <taxon>Gammaproteobacteria</taxon>
        <taxon>Enterobacterales</taxon>
        <taxon>Enterobacteriaceae</taxon>
        <taxon>Escherichia</taxon>
    </lineage>
</organism>
<comment type="function">
    <text evidence="1">Removes C-terminal D-alanyl residues from sugar-peptide cell wall precursors.</text>
</comment>
<comment type="catalytic activity">
    <reaction>
        <text>Preferential cleavage: (Ac)2-L-Lys-D-Ala-|-D-Ala. Also transpeptidation of peptidyl-alanyl moieties that are N-acyl substituents of D-alanine.</text>
        <dbReference type="EC" id="3.4.16.4"/>
    </reaction>
</comment>
<comment type="pathway">
    <text>Cell wall biogenesis; peptidoglycan biosynthesis.</text>
</comment>
<comment type="subcellular location">
    <subcellularLocation>
        <location evidence="1">Cell inner membrane</location>
        <topology evidence="1">Peripheral membrane protein</topology>
    </subcellularLocation>
    <text evidence="1">N-terminal lies in the periplasmic space.</text>
</comment>
<comment type="similarity">
    <text evidence="2">Belongs to the peptidase S11 family.</text>
</comment>
<sequence>MNTIFSARIMKRLALTTALCTAFISAAHADDLNIKTMIPGVPQIDAESYILIDYNSGKVLAEQNADVRRDPASLTKMMTSYVIGQAMKAGKFKETDLVTIGNDAWATGNPVFKGSSLMFLKPGMQVPVSQLIRGINLQSGNDACVAMADFAAGSQDAFVGLMNSYVNALGLKNTHFQTVHGLDADGQYSSARDMALIGQALIRDVPNEYSIYKEKEFTFNGIRQLNRNGLLWDNSLNVDGIKTGHTDKAGYNLVASATEGQMRLISAVMGGRTFKGREAESKKLLTWGFRFFETVNPLKVGKEFASEPVWFGDSDRASLGVDKDVYLTIPRGRMKDLKASYVLNSSELHAPLQKNQVVGTINFQLDGKTIEQRPLVVLQEIPEGNFFGKIIDYIKLMFHHWFG</sequence>
<protein>
    <recommendedName>
        <fullName>D-alanyl-D-alanine carboxypeptidase DacA</fullName>
        <shortName>DD-carboxypeptidase</shortName>
        <shortName>DD-peptidase</shortName>
        <ecNumber>3.4.16.4</ecNumber>
    </recommendedName>
    <alternativeName>
        <fullName>Penicillin-binding protein 5</fullName>
        <shortName>PBP-5</shortName>
    </alternativeName>
</protein>